<reference key="1">
    <citation type="journal article" date="1981" name="J. Virol.">
        <title>Conservation and variation in the hemagglutinins of Hong Kong subtype influenza viruses during antigenic drift.</title>
        <authorList>
            <person name="Both G.W."/>
            <person name="Sleigh M.J."/>
        </authorList>
    </citation>
    <scope>NUCLEOTIDE SEQUENCE [GENOMIC RNA]</scope>
</reference>
<reference key="2">
    <citation type="journal article" date="2000" name="J. Gen. Virol.">
        <title>The strong positive correlation between effective affinity and infectivity neutralization of highly cross-reactive monoclonal antibody IIB4, which recognizes antigenic site B on influenza A virus haemagglutinin.</title>
        <authorList>
            <person name="Kostolansky F."/>
            <person name="Vareckova E."/>
            <person name="Betakova T."/>
            <person name="Mucha V."/>
            <person name="Russ G."/>
            <person name="Wharton S.A."/>
        </authorList>
    </citation>
    <scope>NUCLEOTIDE SEQUENCE [MRNA] OF 17-347</scope>
</reference>
<evidence type="ECO:0000255" key="1">
    <source>
        <dbReference type="HAMAP-Rule" id="MF_04072"/>
    </source>
</evidence>
<evidence type="ECO:0000305" key="2"/>
<feature type="chain" id="PRO_0000440843" description="Hemagglutinin HA1 chain" evidence="1">
    <location>
        <begin position="1"/>
        <end position="329"/>
    </location>
</feature>
<feature type="chain" id="PRO_0000038888" description="Hemagglutinin HA2 chain" evidence="1">
    <location>
        <begin position="330"/>
        <end position="550"/>
    </location>
</feature>
<feature type="topological domain" description="Extracellular" evidence="1">
    <location>
        <begin position="1"/>
        <end position="514"/>
    </location>
</feature>
<feature type="transmembrane region" description="Helical" evidence="1">
    <location>
        <begin position="515"/>
        <end position="535"/>
    </location>
</feature>
<feature type="topological domain" description="Cytoplasmic" evidence="1">
    <location>
        <begin position="536"/>
        <end position="550"/>
    </location>
</feature>
<feature type="site" description="Cleavage; by host" evidence="1">
    <location>
        <begin position="329"/>
        <end position="330"/>
    </location>
</feature>
<feature type="lipid moiety-binding region" description="S-palmitoyl cysteine; by host" evidence="1">
    <location>
        <position position="539"/>
    </location>
</feature>
<feature type="lipid moiety-binding region" description="S-palmitoyl cysteine; by host" evidence="1">
    <location>
        <position position="546"/>
    </location>
</feature>
<feature type="lipid moiety-binding region" description="S-palmitoyl cysteine; by host" evidence="1">
    <location>
        <position position="549"/>
    </location>
</feature>
<feature type="glycosylation site" description="N-linked (GlcNAc...) asparagine; by host" evidence="1">
    <location>
        <position position="8"/>
    </location>
</feature>
<feature type="glycosylation site" description="N-linked (GlcNAc...) asparagine; by host" evidence="1">
    <location>
        <position position="22"/>
    </location>
</feature>
<feature type="glycosylation site" description="N-linked (GlcNAc...) asparagine; by host" evidence="1">
    <location>
        <position position="38"/>
    </location>
</feature>
<feature type="glycosylation site" description="N-linked (GlcNAc...) asparagine; by host" evidence="1">
    <location>
        <position position="63"/>
    </location>
</feature>
<feature type="glycosylation site" description="N-linked (GlcNAc...) asparagine; by host" evidence="1">
    <location>
        <position position="126"/>
    </location>
</feature>
<feature type="glycosylation site" description="N-linked (GlcNAc...) asparagine; by host" evidence="1">
    <location>
        <position position="165"/>
    </location>
</feature>
<feature type="glycosylation site" description="N-linked (GlcNAc...) asparagine; by host" evidence="1">
    <location>
        <position position="285"/>
    </location>
</feature>
<feature type="glycosylation site" description="N-linked (GlcNAc...) asparagine; by host" evidence="1">
    <location>
        <position position="483"/>
    </location>
</feature>
<feature type="disulfide bond" description="Interchain (between HA1 and HA2 chains)" evidence="1">
    <location>
        <begin position="14"/>
        <end position="466"/>
    </location>
</feature>
<feature type="disulfide bond" evidence="1">
    <location>
        <begin position="52"/>
        <end position="277"/>
    </location>
</feature>
<feature type="disulfide bond" evidence="1">
    <location>
        <begin position="64"/>
        <end position="76"/>
    </location>
</feature>
<feature type="disulfide bond" evidence="1">
    <location>
        <begin position="97"/>
        <end position="139"/>
    </location>
</feature>
<feature type="disulfide bond" evidence="1">
    <location>
        <begin position="281"/>
        <end position="305"/>
    </location>
</feature>
<feature type="disulfide bond" evidence="1">
    <location>
        <begin position="473"/>
        <end position="477"/>
    </location>
</feature>
<feature type="sequence conflict" description="In Ref. 2; AAF18090." evidence="2" ref="2">
    <original>N</original>
    <variation>K</variation>
    <location>
        <position position="145"/>
    </location>
</feature>
<feature type="sequence conflict" description="In Ref. 2; AAF18090." evidence="2" ref="2">
    <original>I</original>
    <variation>V</variation>
    <location>
        <position position="213"/>
    </location>
</feature>
<feature type="sequence conflict" description="In Ref. 2; AAF18090." evidence="2" ref="2">
    <original>G</original>
    <variation>V</variation>
    <location>
        <position position="333"/>
    </location>
</feature>
<feature type="non-terminal residue">
    <location>
        <position position="1"/>
    </location>
</feature>
<proteinExistence type="evidence at transcript level"/>
<organismHost>
    <name type="scientific">Aves</name>
    <dbReference type="NCBI Taxonomy" id="8782"/>
</organismHost>
<organismHost>
    <name type="scientific">Cetacea</name>
    <name type="common">whales</name>
    <dbReference type="NCBI Taxonomy" id="9721"/>
</organismHost>
<organismHost>
    <name type="scientific">Homo sapiens</name>
    <name type="common">Human</name>
    <dbReference type="NCBI Taxonomy" id="9606"/>
</organismHost>
<organismHost>
    <name type="scientific">Phocidae</name>
    <name type="common">true seals</name>
    <dbReference type="NCBI Taxonomy" id="9709"/>
</organismHost>
<organismHost>
    <name type="scientific">Sus scrofa</name>
    <name type="common">Pig</name>
    <dbReference type="NCBI Taxonomy" id="9823"/>
</organismHost>
<comment type="function">
    <text evidence="1">Binds to sialic acid-containing receptors on the cell surface, bringing about the attachment of the virus particle to the cell. This attachment induces virion internalization either through clathrin-dependent endocytosis or through clathrin- and caveolin-independent pathway. Plays a major role in the determination of host range restriction and virulence. Class I viral fusion protein. Responsible for penetration of the virus into the cell cytoplasm by mediating the fusion of the membrane of the endocytosed virus particle with the endosomal membrane. Low pH in endosomes induces an irreversible conformational change in HA2, releasing the fusion hydrophobic peptide. Several trimers are required to form a competent fusion pore.</text>
</comment>
<comment type="subunit">
    <text evidence="1">Homotrimer of disulfide-linked HA1-HA2.</text>
</comment>
<comment type="subcellular location">
    <subcellularLocation>
        <location evidence="1">Virion membrane</location>
        <topology evidence="1">Single-pass type I membrane protein</topology>
    </subcellularLocation>
    <subcellularLocation>
        <location evidence="1">Host apical cell membrane</location>
        <topology evidence="1">Single-pass type I membrane protein</topology>
    </subcellularLocation>
    <text evidence="1">Targeted to the apical plasma membrane in epithelial polarized cells through a signal present in the transmembrane domain. Associated with glycosphingolipid- and cholesterol-enriched detergent-resistant lipid rafts.</text>
</comment>
<comment type="PTM">
    <text evidence="1">Palmitoylated.</text>
</comment>
<comment type="PTM">
    <text evidence="1">In natural infection, inactive HA is matured into HA1 and HA2 outside the cell by one or more trypsin-like, arginine-specific endoprotease secreted by the bronchial epithelial cells. One identified protease that may be involved in this process is secreted in lungs by club cells.</text>
</comment>
<comment type="miscellaneous">
    <text>Major glycoprotein, comprises over 80% of the envelope proteins present in virus particle.</text>
</comment>
<comment type="miscellaneous">
    <text>The extent of infection into host organism is determined by HA. Influenza viruses bud from the apical surface of polarized epithelial cells (e.g. bronchial epithelial cells) into lumen of lungs and are therefore usually pneumotropic. The reason is that HA is cleaved by tryptase clara which is restricted to lungs. However, HAs of H5 and H7 pantropic avian viruses subtypes can be cleaved by furin and subtilisin-type enzymes, allowing the virus to grow in other organs than lungs.</text>
</comment>
<comment type="miscellaneous">
    <text>The influenza A genome consist of 8 RNA segments. Genetic variation of hemagglutinin and/or neuraminidase genes results in the emergence of new influenza strains. The mechanism of variation can be the result of point mutations or the result of genetic reassortment between segments of two different strains.</text>
</comment>
<comment type="similarity">
    <text evidence="1">Belongs to the influenza viruses hemagglutinin family.</text>
</comment>
<accession>P03441</accession>
<accession>Q83961</accession>
<accession>Q83962</accession>
<accession>Q9PY85</accession>
<name>HEMA_I79A0</name>
<gene>
    <name evidence="1" type="primary">HA</name>
</gene>
<dbReference type="EMBL" id="J02092">
    <property type="protein sequence ID" value="AAA43182.1"/>
    <property type="molecule type" value="Genomic_RNA"/>
</dbReference>
<dbReference type="EMBL" id="AF201843">
    <property type="protein sequence ID" value="AAF18090.1"/>
    <property type="molecule type" value="mRNA"/>
</dbReference>
<dbReference type="SMR" id="P03441"/>
<dbReference type="GlyCosmos" id="P03441">
    <property type="glycosylation" value="8 sites, No reported glycans"/>
</dbReference>
<dbReference type="GO" id="GO:0020002">
    <property type="term" value="C:host cell plasma membrane"/>
    <property type="evidence" value="ECO:0007669"/>
    <property type="project" value="UniProtKB-SubCell"/>
</dbReference>
<dbReference type="GO" id="GO:0016020">
    <property type="term" value="C:membrane"/>
    <property type="evidence" value="ECO:0007669"/>
    <property type="project" value="UniProtKB-KW"/>
</dbReference>
<dbReference type="GO" id="GO:0019031">
    <property type="term" value="C:viral envelope"/>
    <property type="evidence" value="ECO:0007669"/>
    <property type="project" value="UniProtKB-KW"/>
</dbReference>
<dbReference type="GO" id="GO:0055036">
    <property type="term" value="C:virion membrane"/>
    <property type="evidence" value="ECO:0007669"/>
    <property type="project" value="UniProtKB-SubCell"/>
</dbReference>
<dbReference type="GO" id="GO:0046789">
    <property type="term" value="F:host cell surface receptor binding"/>
    <property type="evidence" value="ECO:0007669"/>
    <property type="project" value="InterPro"/>
</dbReference>
<dbReference type="GO" id="GO:0075512">
    <property type="term" value="P:clathrin-dependent endocytosis of virus by host cell"/>
    <property type="evidence" value="ECO:0007669"/>
    <property type="project" value="UniProtKB-KW"/>
</dbReference>
<dbReference type="GO" id="GO:0039654">
    <property type="term" value="P:fusion of virus membrane with host endosome membrane"/>
    <property type="evidence" value="ECO:0007669"/>
    <property type="project" value="UniProtKB-KW"/>
</dbReference>
<dbReference type="GO" id="GO:0019064">
    <property type="term" value="P:fusion of virus membrane with host plasma membrane"/>
    <property type="evidence" value="ECO:0007669"/>
    <property type="project" value="InterPro"/>
</dbReference>
<dbReference type="GO" id="GO:0019062">
    <property type="term" value="P:virion attachment to host cell"/>
    <property type="evidence" value="ECO:0007669"/>
    <property type="project" value="UniProtKB-KW"/>
</dbReference>
<dbReference type="FunFam" id="3.90.20.10:FF:000001">
    <property type="entry name" value="Hemagglutinin"/>
    <property type="match status" value="1"/>
</dbReference>
<dbReference type="FunFam" id="3.90.209.20:FF:000001">
    <property type="entry name" value="Hemagglutinin"/>
    <property type="match status" value="1"/>
</dbReference>
<dbReference type="Gene3D" id="3.90.20.10">
    <property type="match status" value="1"/>
</dbReference>
<dbReference type="Gene3D" id="3.90.209.20">
    <property type="match status" value="1"/>
</dbReference>
<dbReference type="HAMAP" id="MF_04072">
    <property type="entry name" value="INFV_HEMA"/>
    <property type="match status" value="1"/>
</dbReference>
<dbReference type="InterPro" id="IPR008980">
    <property type="entry name" value="Capsid_hemagglutn"/>
</dbReference>
<dbReference type="InterPro" id="IPR013828">
    <property type="entry name" value="Hemagglutn_HA1_a/b_dom_sf"/>
</dbReference>
<dbReference type="InterPro" id="IPR000149">
    <property type="entry name" value="Hemagglutn_influenz_A"/>
</dbReference>
<dbReference type="InterPro" id="IPR001364">
    <property type="entry name" value="Hemagglutn_influenz_A/B"/>
</dbReference>
<dbReference type="Pfam" id="PF00509">
    <property type="entry name" value="Hemagglutinin"/>
    <property type="match status" value="1"/>
</dbReference>
<dbReference type="PRINTS" id="PR00330">
    <property type="entry name" value="HEMAGGLUTN1"/>
</dbReference>
<dbReference type="PRINTS" id="PR00329">
    <property type="entry name" value="HEMAGGLUTN12"/>
</dbReference>
<dbReference type="SUPFAM" id="SSF58064">
    <property type="entry name" value="Influenza hemagglutinin (stalk)"/>
    <property type="match status" value="1"/>
</dbReference>
<dbReference type="SUPFAM" id="SSF49818">
    <property type="entry name" value="Viral protein domain"/>
    <property type="match status" value="1"/>
</dbReference>
<sequence length="550" mass="61695">QNLPGNDNSTATLCLGHHAVPNGTLVKTITNDQIEVTNATELVQSSSTGRICDSPHRILDGKNCTLIDALLGDPHCDGFQNEKWDLFVERSKAFSNCYPYDVPDYASLRSLVASSGTLEFINEGFNWTGVTQSGGSYACKRGSDNSFFSRLNWLYESESKYPVLNVTMPNNGNFDKLYIWGVHHPSTDKEQTNLYVRASGRVTVSTKRSQQTIIPNIGSRPWVRGLSSRISIYWTIVKPGDILLINSNGNLIAPRGYFKIRTGKSSIMRSDAPIGTCSSECITPNGSIPNDKPXQNVNKITYGACPKYVKQNTLKLATGMRNVPEKQTRGIFGAIAGFIENGWEGMXXGWYGFRHQNSEGTGQAADLKSTQAAIDQINGKLNRVIEKTNEKFHQIEKEFSEVEGRIQDLEKYVEDTKIDLWSYNAELLVALENQHTIDLTDSEMNKLFEKTRRQLRENAEDMGNGCFKIYHKCDNACIGSIRNGTYDHDVYRDEALNNRFQIKGVELKXGYKDWILWISFAISCFLLCVVLLGFIMVXCQKGNIRCNICI</sequence>
<organism>
    <name type="scientific">Influenza A virus (strain A/Bangkok/1/1979 H3N2)</name>
    <dbReference type="NCBI Taxonomy" id="385630"/>
    <lineage>
        <taxon>Viruses</taxon>
        <taxon>Riboviria</taxon>
        <taxon>Orthornavirae</taxon>
        <taxon>Negarnaviricota</taxon>
        <taxon>Polyploviricotina</taxon>
        <taxon>Insthoviricetes</taxon>
        <taxon>Articulavirales</taxon>
        <taxon>Orthomyxoviridae</taxon>
        <taxon>Alphainfluenzavirus</taxon>
        <taxon>Alphainfluenzavirus influenzae</taxon>
        <taxon>Influenza A virus</taxon>
    </lineage>
</organism>
<protein>
    <recommendedName>
        <fullName evidence="1">Hemagglutinin</fullName>
    </recommendedName>
    <component>
        <recommendedName>
            <fullName evidence="1">Hemagglutinin HA1 chain</fullName>
        </recommendedName>
    </component>
    <component>
        <recommendedName>
            <fullName evidence="1">Hemagglutinin HA2 chain</fullName>
        </recommendedName>
    </component>
</protein>
<keyword id="KW-1167">Clathrin- and caveolin-independent endocytosis of virus by host</keyword>
<keyword id="KW-1165">Clathrin-mediated endocytosis of virus by host</keyword>
<keyword id="KW-1015">Disulfide bond</keyword>
<keyword id="KW-1170">Fusion of virus membrane with host endosomal membrane</keyword>
<keyword id="KW-1168">Fusion of virus membrane with host membrane</keyword>
<keyword id="KW-0325">Glycoprotein</keyword>
<keyword id="KW-0348">Hemagglutinin</keyword>
<keyword id="KW-1032">Host cell membrane</keyword>
<keyword id="KW-1043">Host membrane</keyword>
<keyword id="KW-0945">Host-virus interaction</keyword>
<keyword id="KW-0449">Lipoprotein</keyword>
<keyword id="KW-0472">Membrane</keyword>
<keyword id="KW-0564">Palmitate</keyword>
<keyword id="KW-0812">Transmembrane</keyword>
<keyword id="KW-1133">Transmembrane helix</keyword>
<keyword id="KW-1161">Viral attachment to host cell</keyword>
<keyword id="KW-0261">Viral envelope protein</keyword>
<keyword id="KW-1162">Viral penetration into host cytoplasm</keyword>
<keyword id="KW-0946">Virion</keyword>
<keyword id="KW-1164">Virus endocytosis by host</keyword>
<keyword id="KW-1160">Virus entry into host cell</keyword>